<dbReference type="EC" id="7.2.3.1"/>
<dbReference type="EMBL" id="AF377340">
    <property type="protein sequence ID" value="AAK64453.1"/>
    <property type="molecule type" value="Genomic_DNA"/>
</dbReference>
<dbReference type="SMR" id="Q93NB7"/>
<dbReference type="GO" id="GO:0005886">
    <property type="term" value="C:plasma membrane"/>
    <property type="evidence" value="ECO:0007669"/>
    <property type="project" value="UniProtKB-SubCell"/>
</dbReference>
<dbReference type="GO" id="GO:0009678">
    <property type="term" value="F:diphosphate hydrolysis-driven proton transmembrane transporter activity"/>
    <property type="evidence" value="ECO:0007669"/>
    <property type="project" value="InterPro"/>
</dbReference>
<dbReference type="GO" id="GO:0004427">
    <property type="term" value="F:inorganic diphosphate phosphatase activity"/>
    <property type="evidence" value="ECO:0007669"/>
    <property type="project" value="InterPro"/>
</dbReference>
<dbReference type="GO" id="GO:0006814">
    <property type="term" value="P:sodium ion transport"/>
    <property type="evidence" value="ECO:0007669"/>
    <property type="project" value="UniProtKB-KW"/>
</dbReference>
<dbReference type="InterPro" id="IPR004131">
    <property type="entry name" value="PPase-energised_H-pump"/>
</dbReference>
<dbReference type="PANTHER" id="PTHR31998">
    <property type="entry name" value="K(+)-INSENSITIVE PYROPHOSPHATE-ENERGIZED PROTON PUMP"/>
    <property type="match status" value="1"/>
</dbReference>
<dbReference type="Pfam" id="PF03030">
    <property type="entry name" value="H_PPase"/>
    <property type="match status" value="1"/>
</dbReference>
<evidence type="ECO:0000250" key="1"/>
<evidence type="ECO:0000255" key="2"/>
<evidence type="ECO:0000305" key="3"/>
<proteinExistence type="inferred from homology"/>
<feature type="chain" id="PRO_0000217021" description="Putative K(+)-stimulated pyrophosphate-energized sodium pump">
    <location>
        <begin position="1" status="less than"/>
        <end position="275"/>
    </location>
</feature>
<feature type="transmembrane region" description="Helical" evidence="2">
    <location>
        <begin position="51"/>
        <end position="71"/>
    </location>
</feature>
<feature type="transmembrane region" description="Helical" evidence="2">
    <location>
        <begin position="96"/>
        <end position="116"/>
    </location>
</feature>
<feature type="transmembrane region" description="Helical" evidence="2">
    <location>
        <begin position="163"/>
        <end position="182"/>
    </location>
</feature>
<feature type="transmembrane region" description="Helical" evidence="2">
    <location>
        <begin position="189"/>
        <end position="211"/>
    </location>
</feature>
<feature type="transmembrane region" description="Helical" evidence="2">
    <location>
        <begin position="254"/>
        <end position="274"/>
    </location>
</feature>
<feature type="site" description="Determinant of potassium dependence" evidence="1">
    <location>
        <position position="49"/>
    </location>
</feature>
<feature type="non-terminal residue">
    <location>
        <position position="1"/>
    </location>
</feature>
<keyword id="KW-0997">Cell inner membrane</keyword>
<keyword id="KW-1003">Cell membrane</keyword>
<keyword id="KW-0406">Ion transport</keyword>
<keyword id="KW-0460">Magnesium</keyword>
<keyword id="KW-0472">Membrane</keyword>
<keyword id="KW-0630">Potassium</keyword>
<keyword id="KW-0915">Sodium</keyword>
<keyword id="KW-0739">Sodium transport</keyword>
<keyword id="KW-1278">Translocase</keyword>
<keyword id="KW-0812">Transmembrane</keyword>
<keyword id="KW-1133">Transmembrane helix</keyword>
<keyword id="KW-0813">Transport</keyword>
<organism>
    <name type="scientific">Myxococcus xanthus</name>
    <dbReference type="NCBI Taxonomy" id="34"/>
    <lineage>
        <taxon>Bacteria</taxon>
        <taxon>Pseudomonadati</taxon>
        <taxon>Myxococcota</taxon>
        <taxon>Myxococcia</taxon>
        <taxon>Myxococcales</taxon>
        <taxon>Cystobacterineae</taxon>
        <taxon>Myxococcaceae</taxon>
        <taxon>Myxococcus</taxon>
    </lineage>
</organism>
<name>HPPA_MYXXA</name>
<gene>
    <name type="primary">hppA</name>
</gene>
<accession>Q93NB7</accession>
<reference key="1">
    <citation type="journal article" date="2000" name="Microb. Comp. Genomics">
        <title>A large family of eukaryotic-like protein Ser/Thr kinases of Myxococcus xanthus, a developmental bacterium.</title>
        <authorList>
            <person name="Inouye S."/>
            <person name="Jain R."/>
            <person name="Ueki T."/>
            <person name="Nariya H."/>
            <person name="Xu C.Y."/>
            <person name="Hsu M.Y."/>
            <person name="Fernandez-Luque B.A."/>
            <person name="Munoz-Dorado J."/>
            <person name="Farez-Vidal E."/>
            <person name="Inouye M."/>
        </authorList>
    </citation>
    <scope>NUCLEOTIDE SEQUENCE [GENOMIC DNA]</scope>
    <source>
        <strain>DZF1</strain>
    </source>
</reference>
<protein>
    <recommendedName>
        <fullName>Putative K(+)-stimulated pyrophosphate-energized sodium pump</fullName>
        <ecNumber>7.2.3.1</ecNumber>
    </recommendedName>
    <alternativeName>
        <fullName>Membrane-bound sodium-translocating pyrophosphatase</fullName>
    </alternativeName>
    <alternativeName>
        <fullName>Pyrophosphate-energized inorganic pyrophosphatase</fullName>
        <shortName>Na(+)-PPase</shortName>
    </alternativeName>
</protein>
<comment type="function">
    <text evidence="1">Sodium pump that utilizes the energy of pyrophosphate hydrolysis as the driving force for Na(+) movement across the membrane.</text>
</comment>
<comment type="catalytic activity">
    <reaction>
        <text>Na(+)(in) + diphosphate + H2O = Na(+)(out) + 2 phosphate + H(+)</text>
        <dbReference type="Rhea" id="RHEA:57884"/>
        <dbReference type="ChEBI" id="CHEBI:15377"/>
        <dbReference type="ChEBI" id="CHEBI:15378"/>
        <dbReference type="ChEBI" id="CHEBI:29101"/>
        <dbReference type="ChEBI" id="CHEBI:33019"/>
        <dbReference type="ChEBI" id="CHEBI:43474"/>
        <dbReference type="EC" id="7.2.3.1"/>
    </reaction>
</comment>
<comment type="cofactor">
    <cofactor evidence="1">
        <name>Mg(2+)</name>
        <dbReference type="ChEBI" id="CHEBI:18420"/>
    </cofactor>
</comment>
<comment type="activity regulation">
    <text evidence="1">Requires K(+) for maximal activity.</text>
</comment>
<comment type="subunit">
    <text evidence="1">Homodimer.</text>
</comment>
<comment type="subcellular location">
    <subcellularLocation>
        <location evidence="1">Cell inner membrane</location>
        <topology evidence="1">Multi-pass membrane protein</topology>
    </subcellularLocation>
</comment>
<comment type="similarity">
    <text evidence="3">Belongs to the H(+)-translocating pyrophosphatase (TC 3.A.10) family. K(+)-stimulated subfamily.</text>
</comment>
<sequence>MLGGTAVVMTVDAYGPISDNAGGISEMSGLGPEVRAITDELDAVGNTTAAIGKGFAIGSATLTVIALFSAFNLEVNHTRIAAGLPEMSLQLTNPNVIVGLLLGSILPFLVGASTMLAVGRAAGAIVEEIGRQFREIPGLMELKADPDPKKIVDIATKSALQEMVFPGIIAVAAPPLVGYLLGPGALAGLLAGSLVVGATMALYMANAGGAWDNAKKFIEKGKLPGHAKGSAVHKAAVVGDMVGDPFKDTSGPGVAILIKVMSVVSLLVASLIALR</sequence>